<evidence type="ECO:0000250" key="1"/>
<evidence type="ECO:0000255" key="2">
    <source>
        <dbReference type="PROSITE-ProRule" id="PRU01300"/>
    </source>
</evidence>
<evidence type="ECO:0000305" key="3"/>
<name>R1AB_CVPR8</name>
<feature type="chain" id="PRO_0000037401" description="Putative 2'-O-methyl transferase" evidence="1">
    <location>
        <begin position="1" status="less than"/>
        <end position="131"/>
    </location>
</feature>
<feature type="domain" description="Nidovirus-type SAM-dependent 2'-O-MTase" evidence="2">
    <location>
        <begin position="1" status="less than"/>
        <end position="128"/>
    </location>
</feature>
<feature type="non-terminal residue">
    <location>
        <position position="1"/>
    </location>
</feature>
<organismHost>
    <name type="scientific">Sus scrofa</name>
    <name type="common">Pig</name>
    <dbReference type="NCBI Taxonomy" id="9823"/>
</organismHost>
<organism>
    <name type="scientific">Porcine respiratory coronavirus (strain 86/137004 / isolate British)</name>
    <name type="common">PRCoV</name>
    <name type="synonym">PRCV</name>
    <dbReference type="NCBI Taxonomy" id="33736"/>
    <lineage>
        <taxon>Viruses</taxon>
        <taxon>Riboviria</taxon>
        <taxon>Orthornavirae</taxon>
        <taxon>Pisuviricota</taxon>
        <taxon>Pisoniviricetes</taxon>
        <taxon>Nidovirales</taxon>
        <taxon>Cornidovirineae</taxon>
        <taxon>Coronaviridae</taxon>
        <taxon>Orthocoronavirinae</taxon>
        <taxon>Alphacoronavirus</taxon>
        <taxon>Tegacovirus</taxon>
        <taxon>Alphacoronavirus 1</taxon>
    </lineage>
</organism>
<protein>
    <recommendedName>
        <fullName>Replicase polyprotein 1ab</fullName>
        <shortName>pp1ab</shortName>
    </recommendedName>
    <alternativeName>
        <fullName>ORF1ab polyprotein</fullName>
    </alternativeName>
    <component>
        <recommendedName>
            <fullName>Putative 2'-O-methyl transferase</fullName>
            <ecNumber>2.1.1.-</ecNumber>
        </recommendedName>
        <alternativeName>
            <fullName>nsp16</fullName>
        </alternativeName>
    </component>
</protein>
<sequence>ITEFSWNKYLYELIQRFEYWTVFCTSVNTSSSEGFLIGVNYLGPYCDKAIVDGNIMHANYIFWRNSTIMALSHNSVLDTPKFKCRCNNALIVNLKEKELNEMVIGLLRKGKLLIRNNGKLLNFGNHFINTP</sequence>
<gene>
    <name type="primary">rep</name>
    <name type="ORF">1a-1b</name>
</gene>
<proteinExistence type="predicted"/>
<accession>Q04158</accession>
<comment type="function">
    <text>The replicase polyprotein of coronaviruses is a multifunctional protein: it contains the activities necessary for the transcription of negative stranded RNA, leader RNA, subgenomic mRNAs and progeny virion RNA as well as proteinases responsible for the cleavage of the polyprotein into functional products.</text>
</comment>
<comment type="alternative products">
    <event type="ribosomal frameshifting"/>
    <isoform>
        <id>Q04158-1</id>
        <name>Replicase polyprotein 1ab</name>
        <name>pp1ab</name>
        <sequence type="displayed"/>
    </isoform>
    <isoform>
        <id>Q04158-2</id>
        <name>Replicase polyprotein 1a</name>
        <name>pp1a</name>
        <name>ORF1a polyprotein</name>
        <sequence type="not described"/>
    </isoform>
</comment>
<comment type="miscellaneous">
    <molecule>Isoform Replicase polyprotein 1ab</molecule>
    <text>Produced by -1 ribosomal frameshifting at the 1a-1b genes boundary.</text>
</comment>
<comment type="miscellaneous">
    <molecule>Isoform Replicase polyprotein 1a</molecule>
    <text evidence="3">Produced by conventional translation.</text>
</comment>
<dbReference type="EC" id="2.1.1.-"/>
<dbReference type="EMBL" id="X60089">
    <property type="protein sequence ID" value="CAA42687.1"/>
    <property type="molecule type" value="Genomic_RNA"/>
</dbReference>
<dbReference type="PIR" id="S24285">
    <property type="entry name" value="S24285"/>
</dbReference>
<dbReference type="SMR" id="Q04158"/>
<dbReference type="GO" id="GO:0004483">
    <property type="term" value="F:mRNA (nucleoside-2'-O-)-methyltransferase activity"/>
    <property type="evidence" value="ECO:0007669"/>
    <property type="project" value="InterPro"/>
</dbReference>
<dbReference type="GO" id="GO:0032259">
    <property type="term" value="P:methylation"/>
    <property type="evidence" value="ECO:0007669"/>
    <property type="project" value="UniProtKB-KW"/>
</dbReference>
<dbReference type="GO" id="GO:0075523">
    <property type="term" value="P:viral translational frameshifting"/>
    <property type="evidence" value="ECO:0007669"/>
    <property type="project" value="UniProtKB-KW"/>
</dbReference>
<dbReference type="Gene3D" id="3.40.50.150">
    <property type="entry name" value="Vaccinia Virus protein VP39"/>
    <property type="match status" value="1"/>
</dbReference>
<dbReference type="InterPro" id="IPR046438">
    <property type="entry name" value="NIV_2_O_MTASE"/>
</dbReference>
<dbReference type="InterPro" id="IPR009461">
    <property type="entry name" value="NSP16_CoV-like"/>
</dbReference>
<dbReference type="InterPro" id="IPR029063">
    <property type="entry name" value="SAM-dependent_MTases_sf"/>
</dbReference>
<dbReference type="Pfam" id="PF06460">
    <property type="entry name" value="CoV_Methyltr_2"/>
    <property type="match status" value="1"/>
</dbReference>
<dbReference type="PROSITE" id="PS51955">
    <property type="entry name" value="NIV_2_O_MTASE"/>
    <property type="match status" value="1"/>
</dbReference>
<keyword id="KW-0489">Methyltransferase</keyword>
<keyword id="KW-0688">Ribosomal frameshifting</keyword>
<keyword id="KW-0808">Transferase</keyword>
<reference key="1">
    <citation type="journal article" date="1991" name="Virus Res.">
        <title>The cloning and sequencing of the virion protein genes from a British isolate of porcine respiratory coronavirus: comparison with transmissible gastroenteritis virus genes.</title>
        <authorList>
            <person name="Britton P."/>
            <person name="Mawditt K.L."/>
            <person name="Page K.W."/>
        </authorList>
    </citation>
    <scope>NUCLEOTIDE SEQUENCE [GENOMIC RNA]</scope>
</reference>